<reference key="1">
    <citation type="submission" date="2003-01" db="EMBL/GenBank/DDBJ databases">
        <authorList>
            <consortium name="NIH - Zebrafish Gene Collection (ZGC) project"/>
        </authorList>
    </citation>
    <scope>NUCLEOTIDE SEQUENCE [LARGE SCALE MRNA]</scope>
    <source>
        <strain>AB</strain>
    </source>
</reference>
<sequence>MSFLSISRLAPRLLSSKNAACVVVAARNASASTNLKDVLSDLVPKEQSRIKNFKQQYGKTSIGQITVDMVYGGMRGVKGLVYETSVLDPDEGIRFRGYSIPECQQLLPKAPGGEEPLPEGLFWLLVTGQVPTEEQVSWLSKEWAKRAALPSHVVTMLDNFPTNLHPMSQFSAAITALNSESSFARAYSEGVNKAKYWEFVYEDSMDLIAKLPCVAAKIYRNLYREGSSIGAIDSNLDWSHNFTNMLGYTEPQFTELMRLYLTIHSDHEGGNVSAHTSHLVGSALSDPYLSFSAAMNGLAGPLHGLANQEVLVWLTALQKELGGEVSDEKMRDYIWNTLKSGRVVPGYGHAVLRKTDPRYTCQREFALKHLPNDPMFKLVAQLYKIVPNVLLEQGKAKNPWPNVDAHSGVLLQYYGMTEMNYYTVLFGVSRALGVLAQLVWSRALGFPLERPKSMSTDGLMALVGAKSG</sequence>
<name>CISY_DANRE</name>
<keyword id="KW-0496">Mitochondrion</keyword>
<keyword id="KW-1185">Reference proteome</keyword>
<keyword id="KW-0808">Transferase</keyword>
<keyword id="KW-0809">Transit peptide</keyword>
<keyword id="KW-0816">Tricarboxylic acid cycle</keyword>
<proteinExistence type="evidence at transcript level"/>
<accession>Q7ZVY5</accession>
<gene>
    <name type="primary">cs</name>
    <name type="ORF">zgc:55507</name>
</gene>
<dbReference type="EC" id="2.3.3.1"/>
<dbReference type="EMBL" id="BC045362">
    <property type="protein sequence ID" value="AAH45362.1"/>
    <property type="molecule type" value="mRNA"/>
</dbReference>
<dbReference type="RefSeq" id="NP_955892.1">
    <property type="nucleotide sequence ID" value="NM_199598.1"/>
</dbReference>
<dbReference type="SMR" id="Q7ZVY5"/>
<dbReference type="FunCoup" id="Q7ZVY5">
    <property type="interactions" value="1930"/>
</dbReference>
<dbReference type="STRING" id="7955.ENSDARP00000135698"/>
<dbReference type="PaxDb" id="7955-ENSDARP00000094021"/>
<dbReference type="GeneID" id="322339"/>
<dbReference type="KEGG" id="dre:322339"/>
<dbReference type="AGR" id="ZFIN:ZDB-GENE-030131-1058"/>
<dbReference type="CTD" id="1431"/>
<dbReference type="ZFIN" id="ZDB-GENE-030131-1058">
    <property type="gene designation" value="cs"/>
</dbReference>
<dbReference type="eggNOG" id="KOG2617">
    <property type="taxonomic scope" value="Eukaryota"/>
</dbReference>
<dbReference type="InParanoid" id="Q7ZVY5"/>
<dbReference type="OrthoDB" id="8017587at2759"/>
<dbReference type="PhylomeDB" id="Q7ZVY5"/>
<dbReference type="Reactome" id="R-DRE-71403">
    <property type="pathway name" value="Citric acid cycle (TCA cycle)"/>
</dbReference>
<dbReference type="Reactome" id="R-DRE-9854311">
    <property type="pathway name" value="Maturation of TCA enzymes and regulation of TCA cycle"/>
</dbReference>
<dbReference type="UniPathway" id="UPA00223">
    <property type="reaction ID" value="UER00717"/>
</dbReference>
<dbReference type="PRO" id="PR:Q7ZVY5"/>
<dbReference type="Proteomes" id="UP000000437">
    <property type="component" value="Chromosome 23"/>
</dbReference>
<dbReference type="GO" id="GO:0005759">
    <property type="term" value="C:mitochondrial matrix"/>
    <property type="evidence" value="ECO:0000250"/>
    <property type="project" value="UniProtKB"/>
</dbReference>
<dbReference type="GO" id="GO:0004108">
    <property type="term" value="F:citrate (Si)-synthase activity"/>
    <property type="evidence" value="ECO:0000250"/>
    <property type="project" value="UniProtKB"/>
</dbReference>
<dbReference type="GO" id="GO:0042802">
    <property type="term" value="F:identical protein binding"/>
    <property type="evidence" value="ECO:0000250"/>
    <property type="project" value="UniProtKB"/>
</dbReference>
<dbReference type="GO" id="GO:0005975">
    <property type="term" value="P:carbohydrate metabolic process"/>
    <property type="evidence" value="ECO:0000250"/>
    <property type="project" value="UniProtKB"/>
</dbReference>
<dbReference type="GO" id="GO:0006101">
    <property type="term" value="P:citrate metabolic process"/>
    <property type="evidence" value="ECO:0007669"/>
    <property type="project" value="InterPro"/>
</dbReference>
<dbReference type="GO" id="GO:0014823">
    <property type="term" value="P:response to activity"/>
    <property type="evidence" value="ECO:0000314"/>
    <property type="project" value="ZFIN"/>
</dbReference>
<dbReference type="GO" id="GO:0006099">
    <property type="term" value="P:tricarboxylic acid cycle"/>
    <property type="evidence" value="ECO:0000318"/>
    <property type="project" value="GO_Central"/>
</dbReference>
<dbReference type="CDD" id="cd06105">
    <property type="entry name" value="ScCit1-2_like"/>
    <property type="match status" value="1"/>
</dbReference>
<dbReference type="FunFam" id="1.10.230.10:FF:000001">
    <property type="entry name" value="Citrate synthase"/>
    <property type="match status" value="1"/>
</dbReference>
<dbReference type="FunFam" id="1.10.580.10:FF:000001">
    <property type="entry name" value="Citrate synthase"/>
    <property type="match status" value="1"/>
</dbReference>
<dbReference type="Gene3D" id="1.10.580.10">
    <property type="entry name" value="Citrate Synthase, domain 1"/>
    <property type="match status" value="1"/>
</dbReference>
<dbReference type="Gene3D" id="1.10.230.10">
    <property type="entry name" value="Cytochrome P450-Terp, domain 2"/>
    <property type="match status" value="1"/>
</dbReference>
<dbReference type="InterPro" id="IPR016142">
    <property type="entry name" value="Citrate_synth-like_lrg_a-sub"/>
</dbReference>
<dbReference type="InterPro" id="IPR016143">
    <property type="entry name" value="Citrate_synth-like_sm_a-sub"/>
</dbReference>
<dbReference type="InterPro" id="IPR002020">
    <property type="entry name" value="Citrate_synthase"/>
</dbReference>
<dbReference type="InterPro" id="IPR019810">
    <property type="entry name" value="Citrate_synthase_AS"/>
</dbReference>
<dbReference type="InterPro" id="IPR010109">
    <property type="entry name" value="Citrate_synthase_euk"/>
</dbReference>
<dbReference type="InterPro" id="IPR036969">
    <property type="entry name" value="Citrate_synthase_sf"/>
</dbReference>
<dbReference type="NCBIfam" id="TIGR01793">
    <property type="entry name" value="cit_synth_euk"/>
    <property type="match status" value="1"/>
</dbReference>
<dbReference type="NCBIfam" id="NF007128">
    <property type="entry name" value="PRK09569.1"/>
    <property type="match status" value="1"/>
</dbReference>
<dbReference type="PANTHER" id="PTHR11739">
    <property type="entry name" value="CITRATE SYNTHASE"/>
    <property type="match status" value="1"/>
</dbReference>
<dbReference type="PANTHER" id="PTHR11739:SF8">
    <property type="entry name" value="CITRATE SYNTHASE, MITOCHONDRIAL"/>
    <property type="match status" value="1"/>
</dbReference>
<dbReference type="Pfam" id="PF00285">
    <property type="entry name" value="Citrate_synt"/>
    <property type="match status" value="1"/>
</dbReference>
<dbReference type="PRINTS" id="PR00143">
    <property type="entry name" value="CITRTSNTHASE"/>
</dbReference>
<dbReference type="SUPFAM" id="SSF48256">
    <property type="entry name" value="Citrate synthase"/>
    <property type="match status" value="1"/>
</dbReference>
<dbReference type="PROSITE" id="PS00480">
    <property type="entry name" value="CITRATE_SYNTHASE"/>
    <property type="match status" value="1"/>
</dbReference>
<comment type="function">
    <text evidence="5">Key enzyme of the Krebs tricarboxylic acid cycle which catalyzes the synthesis of citrate from acetyl coenzyme A and oxaloacetate.</text>
</comment>
<comment type="catalytic activity">
    <reaction evidence="4">
        <text>oxaloacetate + acetyl-CoA + H2O = citrate + CoA + H(+)</text>
        <dbReference type="Rhea" id="RHEA:16845"/>
        <dbReference type="ChEBI" id="CHEBI:15377"/>
        <dbReference type="ChEBI" id="CHEBI:15378"/>
        <dbReference type="ChEBI" id="CHEBI:16452"/>
        <dbReference type="ChEBI" id="CHEBI:16947"/>
        <dbReference type="ChEBI" id="CHEBI:57287"/>
        <dbReference type="ChEBI" id="CHEBI:57288"/>
        <dbReference type="EC" id="2.3.3.1"/>
    </reaction>
</comment>
<comment type="pathway">
    <text>Carbohydrate metabolism; tricarboxylic acid cycle; isocitrate from oxaloacetate: step 1/2.</text>
</comment>
<comment type="subunit">
    <text evidence="2">Homodimer.</text>
</comment>
<comment type="subcellular location">
    <subcellularLocation>
        <location evidence="3">Mitochondrion matrix</location>
    </subcellularLocation>
</comment>
<comment type="miscellaneous">
    <text>Citrate synthase is found in nearly all cells capable of oxidative metabolism.</text>
</comment>
<comment type="similarity">
    <text evidence="5">Belongs to the citrate synthase family.</text>
</comment>
<organism>
    <name type="scientific">Danio rerio</name>
    <name type="common">Zebrafish</name>
    <name type="synonym">Brachydanio rerio</name>
    <dbReference type="NCBI Taxonomy" id="7955"/>
    <lineage>
        <taxon>Eukaryota</taxon>
        <taxon>Metazoa</taxon>
        <taxon>Chordata</taxon>
        <taxon>Craniata</taxon>
        <taxon>Vertebrata</taxon>
        <taxon>Euteleostomi</taxon>
        <taxon>Actinopterygii</taxon>
        <taxon>Neopterygii</taxon>
        <taxon>Teleostei</taxon>
        <taxon>Ostariophysi</taxon>
        <taxon>Cypriniformes</taxon>
        <taxon>Danionidae</taxon>
        <taxon>Danioninae</taxon>
        <taxon>Danio</taxon>
    </lineage>
</organism>
<feature type="transit peptide" description="Mitochondrion" evidence="1">
    <location>
        <begin position="1"/>
        <end position="30"/>
    </location>
</feature>
<feature type="chain" id="PRO_0000253902" description="Citrate synthase, mitochondrial">
    <location>
        <begin position="31"/>
        <end position="468"/>
    </location>
</feature>
<feature type="active site" evidence="4">
    <location>
        <position position="303"/>
    </location>
</feature>
<feature type="active site" evidence="4">
    <location>
        <position position="349"/>
    </location>
</feature>
<feature type="active site" evidence="4">
    <location>
        <position position="404"/>
    </location>
</feature>
<feature type="binding site" description="in chain A" evidence="2">
    <location>
        <position position="358"/>
    </location>
    <ligand>
        <name>oxaloacetate</name>
        <dbReference type="ChEBI" id="CHEBI:16452"/>
        <note>ligand shared between homodimeric partners</note>
    </ligand>
</feature>
<feature type="binding site" description="in chain A" evidence="2">
    <location>
        <position position="430"/>
    </location>
    <ligand>
        <name>oxaloacetate</name>
        <dbReference type="ChEBI" id="CHEBI:16452"/>
        <note>ligand shared between homodimeric partners</note>
    </ligand>
</feature>
<feature type="binding site" description="in chain B" evidence="2">
    <location>
        <position position="450"/>
    </location>
    <ligand>
        <name>oxaloacetate</name>
        <dbReference type="ChEBI" id="CHEBI:16452"/>
        <note>ligand shared between homodimeric partners</note>
    </ligand>
</feature>
<protein>
    <recommendedName>
        <fullName>Citrate synthase, mitochondrial</fullName>
        <ecNumber>2.3.3.1</ecNumber>
    </recommendedName>
    <alternativeName>
        <fullName>Citrate (Si)-synthase</fullName>
    </alternativeName>
</protein>
<evidence type="ECO:0000250" key="1"/>
<evidence type="ECO:0000250" key="2">
    <source>
        <dbReference type="UniProtKB" id="O75390"/>
    </source>
</evidence>
<evidence type="ECO:0000250" key="3">
    <source>
        <dbReference type="UniProtKB" id="P00889"/>
    </source>
</evidence>
<evidence type="ECO:0000255" key="4">
    <source>
        <dbReference type="PROSITE-ProRule" id="PRU10117"/>
    </source>
</evidence>
<evidence type="ECO:0000305" key="5"/>